<accession>A8LH55</accession>
<sequence length="72" mass="7997">MAQRDTGGGQQRTGRRDDETAEAEVEESGASDLKERHEKLSEDVDSLLDEIDDVLEENAEEFVKGYVQKGGQ</sequence>
<comment type="function">
    <text evidence="1">Protein modifier that is covalently attached to lysine residues of substrate proteins, thereby targeting them for proteasomal degradation. The tagging system is termed pupylation.</text>
</comment>
<comment type="pathway">
    <text evidence="1">Protein degradation; proteasomal Pup-dependent pathway.</text>
</comment>
<comment type="subunit">
    <text evidence="1">Strongly interacts with the proteasome-associated ATPase ARC through a hydrophobic interface; the interacting region of Pup lies in its C-terminal half. There is one Pup binding site per ARC hexamer ring.</text>
</comment>
<comment type="domain">
    <text evidence="1">The N-terminal unstructured half of Pup provides a signal required to initiate unfolding and degradation by the proteasome but is not needed for pupylation, while the C-terminal helical half of Pup interacts with ARC to target proteins to the proteasome.</text>
</comment>
<comment type="PTM">
    <text evidence="1">Is modified by deamidation of its C-terminal glutamine to glutamate by the deamidase Dop, a prerequisite to the subsequent pupylation process.</text>
</comment>
<comment type="similarity">
    <text evidence="1">Belongs to the prokaryotic ubiquitin-like protein family.</text>
</comment>
<name>PUP_PARS2</name>
<protein>
    <recommendedName>
        <fullName evidence="1">Prokaryotic ubiquitin-like protein Pup</fullName>
    </recommendedName>
    <alternativeName>
        <fullName evidence="1">Bacterial ubiquitin-like modifier</fullName>
    </alternativeName>
</protein>
<reference key="1">
    <citation type="journal article" date="2007" name="Genome Res.">
        <title>Genome characteristics of facultatively symbiotic Frankia sp. strains reflect host range and host plant biogeography.</title>
        <authorList>
            <person name="Normand P."/>
            <person name="Lapierre P."/>
            <person name="Tisa L.S."/>
            <person name="Gogarten J.P."/>
            <person name="Alloisio N."/>
            <person name="Bagnarol E."/>
            <person name="Bassi C.A."/>
            <person name="Berry A.M."/>
            <person name="Bickhart D.M."/>
            <person name="Choisne N."/>
            <person name="Couloux A."/>
            <person name="Cournoyer B."/>
            <person name="Cruveiller S."/>
            <person name="Daubin V."/>
            <person name="Demange N."/>
            <person name="Francino M.P."/>
            <person name="Goltsman E."/>
            <person name="Huang Y."/>
            <person name="Kopp O.R."/>
            <person name="Labarre L."/>
            <person name="Lapidus A."/>
            <person name="Lavire C."/>
            <person name="Marechal J."/>
            <person name="Martinez M."/>
            <person name="Mastronunzio J.E."/>
            <person name="Mullin B.C."/>
            <person name="Niemann J."/>
            <person name="Pujic P."/>
            <person name="Rawnsley T."/>
            <person name="Rouy Z."/>
            <person name="Schenowitz C."/>
            <person name="Sellstedt A."/>
            <person name="Tavares F."/>
            <person name="Tomkins J.P."/>
            <person name="Vallenet D."/>
            <person name="Valverde C."/>
            <person name="Wall L.G."/>
            <person name="Wang Y."/>
            <person name="Medigue C."/>
            <person name="Benson D.R."/>
        </authorList>
    </citation>
    <scope>NUCLEOTIDE SEQUENCE [LARGE SCALE GENOMIC DNA]</scope>
    <source>
        <strain>EAN1pec</strain>
    </source>
</reference>
<feature type="chain" id="PRO_0000390583" description="Prokaryotic ubiquitin-like protein Pup">
    <location>
        <begin position="1"/>
        <end position="72"/>
    </location>
</feature>
<feature type="region of interest" description="Disordered" evidence="2">
    <location>
        <begin position="1"/>
        <end position="41"/>
    </location>
</feature>
<feature type="region of interest" description="ARC ATPase binding" evidence="1">
    <location>
        <begin position="28"/>
        <end position="66"/>
    </location>
</feature>
<feature type="coiled-coil region" evidence="1">
    <location>
        <begin position="22"/>
        <end position="61"/>
    </location>
</feature>
<feature type="compositionally biased region" description="Gly residues" evidence="2">
    <location>
        <begin position="1"/>
        <end position="11"/>
    </location>
</feature>
<feature type="compositionally biased region" description="Acidic residues" evidence="2">
    <location>
        <begin position="19"/>
        <end position="29"/>
    </location>
</feature>
<feature type="compositionally biased region" description="Basic and acidic residues" evidence="2">
    <location>
        <begin position="32"/>
        <end position="41"/>
    </location>
</feature>
<feature type="modified residue" description="Deamidated glutamine" evidence="1">
    <location>
        <position position="72"/>
    </location>
</feature>
<feature type="cross-link" description="Isoglutamyl lysine isopeptide (Gln-Lys) (interchain with K-? in acceptor proteins)" evidence="1">
    <location>
        <position position="72"/>
    </location>
</feature>
<organism>
    <name type="scientific">Parafrankia sp. (strain EAN1pec)</name>
    <dbReference type="NCBI Taxonomy" id="298653"/>
    <lineage>
        <taxon>Bacteria</taxon>
        <taxon>Bacillati</taxon>
        <taxon>Actinomycetota</taxon>
        <taxon>Actinomycetes</taxon>
        <taxon>Frankiales</taxon>
        <taxon>Frankiaceae</taxon>
        <taxon>Parafrankia</taxon>
    </lineage>
</organism>
<proteinExistence type="inferred from homology"/>
<evidence type="ECO:0000255" key="1">
    <source>
        <dbReference type="HAMAP-Rule" id="MF_02106"/>
    </source>
</evidence>
<evidence type="ECO:0000256" key="2">
    <source>
        <dbReference type="SAM" id="MobiDB-lite"/>
    </source>
</evidence>
<dbReference type="EMBL" id="CP000820">
    <property type="protein sequence ID" value="ABW14245.1"/>
    <property type="molecule type" value="Genomic_DNA"/>
</dbReference>
<dbReference type="RefSeq" id="WP_018499886.1">
    <property type="nucleotide sequence ID" value="NC_009921.1"/>
</dbReference>
<dbReference type="SMR" id="A8LH55"/>
<dbReference type="STRING" id="298653.Franean1_4880"/>
<dbReference type="KEGG" id="fre:Franean1_4880"/>
<dbReference type="eggNOG" id="ENOG50333JS">
    <property type="taxonomic scope" value="Bacteria"/>
</dbReference>
<dbReference type="HOGENOM" id="CLU_183816_2_0_11"/>
<dbReference type="UniPathway" id="UPA00997"/>
<dbReference type="GO" id="GO:0070628">
    <property type="term" value="F:proteasome binding"/>
    <property type="evidence" value="ECO:0007669"/>
    <property type="project" value="UniProtKB-UniRule"/>
</dbReference>
<dbReference type="GO" id="GO:0031386">
    <property type="term" value="F:protein tag activity"/>
    <property type="evidence" value="ECO:0007669"/>
    <property type="project" value="UniProtKB-UniRule"/>
</dbReference>
<dbReference type="GO" id="GO:0019941">
    <property type="term" value="P:modification-dependent protein catabolic process"/>
    <property type="evidence" value="ECO:0007669"/>
    <property type="project" value="UniProtKB-UniRule"/>
</dbReference>
<dbReference type="GO" id="GO:0010498">
    <property type="term" value="P:proteasomal protein catabolic process"/>
    <property type="evidence" value="ECO:0007669"/>
    <property type="project" value="UniProtKB-UniRule"/>
</dbReference>
<dbReference type="GO" id="GO:0070490">
    <property type="term" value="P:protein pupylation"/>
    <property type="evidence" value="ECO:0007669"/>
    <property type="project" value="UniProtKB-UniRule"/>
</dbReference>
<dbReference type="HAMAP" id="MF_02106">
    <property type="entry name" value="Pup"/>
    <property type="match status" value="1"/>
</dbReference>
<dbReference type="InterPro" id="IPR008515">
    <property type="entry name" value="Ubiquitin-like_Pup"/>
</dbReference>
<dbReference type="NCBIfam" id="TIGR03687">
    <property type="entry name" value="pupylate_cterm"/>
    <property type="match status" value="1"/>
</dbReference>
<dbReference type="Pfam" id="PF05639">
    <property type="entry name" value="Pup"/>
    <property type="match status" value="1"/>
</dbReference>
<keyword id="KW-0175">Coiled coil</keyword>
<keyword id="KW-1017">Isopeptide bond</keyword>
<keyword id="KW-0833">Ubl conjugation pathway</keyword>
<gene>
    <name evidence="1" type="primary">pup</name>
    <name type="ordered locus">Franean1_4880</name>
</gene>